<dbReference type="EMBL" id="CU329671">
    <property type="protein sequence ID" value="CAB08783.1"/>
    <property type="molecule type" value="Genomic_DNA"/>
</dbReference>
<dbReference type="EMBL" id="AB000518">
    <property type="protein sequence ID" value="BAA19134.1"/>
    <property type="molecule type" value="mRNA"/>
</dbReference>
<dbReference type="PIR" id="T40002">
    <property type="entry name" value="T40002"/>
</dbReference>
<dbReference type="RefSeq" id="NP_596359.1">
    <property type="nucleotide sequence ID" value="NM_001022280.2"/>
</dbReference>
<dbReference type="SMR" id="P55877"/>
<dbReference type="BioGRID" id="277049">
    <property type="interactions" value="3"/>
</dbReference>
<dbReference type="FunCoup" id="P55877">
    <property type="interactions" value="747"/>
</dbReference>
<dbReference type="STRING" id="284812.P55877"/>
<dbReference type="PaxDb" id="4896-SPBC25H2.07.1"/>
<dbReference type="EnsemblFungi" id="SPBC25H2.07.1">
    <property type="protein sequence ID" value="SPBC25H2.07.1:pep"/>
    <property type="gene ID" value="SPBC25H2.07"/>
</dbReference>
<dbReference type="GeneID" id="2540521"/>
<dbReference type="KEGG" id="spo:2540521"/>
<dbReference type="PomBase" id="SPBC25H2.07">
    <property type="gene designation" value="tif11"/>
</dbReference>
<dbReference type="VEuPathDB" id="FungiDB:SPBC25H2.07"/>
<dbReference type="eggNOG" id="KOG3403">
    <property type="taxonomic scope" value="Eukaryota"/>
</dbReference>
<dbReference type="HOGENOM" id="CLU_109098_2_0_1"/>
<dbReference type="InParanoid" id="P55877"/>
<dbReference type="OMA" id="KMEDQEY"/>
<dbReference type="PhylomeDB" id="P55877"/>
<dbReference type="Reactome" id="R-SPO-156827">
    <property type="pathway name" value="L13a-mediated translational silencing of Ceruloplasmin expression"/>
</dbReference>
<dbReference type="Reactome" id="R-SPO-72649">
    <property type="pathway name" value="Translation initiation complex formation"/>
</dbReference>
<dbReference type="Reactome" id="R-SPO-72689">
    <property type="pathway name" value="Formation of a pool of free 40S subunits"/>
</dbReference>
<dbReference type="Reactome" id="R-SPO-72695">
    <property type="pathway name" value="Formation of the ternary complex, and subsequently, the 43S complex"/>
</dbReference>
<dbReference type="Reactome" id="R-SPO-72702">
    <property type="pathway name" value="Ribosomal scanning and start codon recognition"/>
</dbReference>
<dbReference type="Reactome" id="R-SPO-72706">
    <property type="pathway name" value="GTP hydrolysis and joining of the 60S ribosomal subunit"/>
</dbReference>
<dbReference type="PRO" id="PR:P55877"/>
<dbReference type="Proteomes" id="UP000002485">
    <property type="component" value="Chromosome II"/>
</dbReference>
<dbReference type="GO" id="GO:0005737">
    <property type="term" value="C:cytoplasm"/>
    <property type="evidence" value="ECO:0000318"/>
    <property type="project" value="GO_Central"/>
</dbReference>
<dbReference type="GO" id="GO:0005829">
    <property type="term" value="C:cytosol"/>
    <property type="evidence" value="ECO:0007005"/>
    <property type="project" value="PomBase"/>
</dbReference>
<dbReference type="GO" id="GO:0003725">
    <property type="term" value="F:double-stranded RNA binding"/>
    <property type="evidence" value="ECO:0000314"/>
    <property type="project" value="PomBase"/>
</dbReference>
<dbReference type="GO" id="GO:0033592">
    <property type="term" value="F:RNA strand annealing activity"/>
    <property type="evidence" value="ECO:0000314"/>
    <property type="project" value="PomBase"/>
</dbReference>
<dbReference type="GO" id="GO:0003743">
    <property type="term" value="F:translation initiation factor activity"/>
    <property type="evidence" value="ECO:0000318"/>
    <property type="project" value="GO_Central"/>
</dbReference>
<dbReference type="GO" id="GO:0002183">
    <property type="term" value="P:cytoplasmic translational initiation"/>
    <property type="evidence" value="ECO:0000266"/>
    <property type="project" value="PomBase"/>
</dbReference>
<dbReference type="GO" id="GO:0006413">
    <property type="term" value="P:translational initiation"/>
    <property type="evidence" value="ECO:0000318"/>
    <property type="project" value="GO_Central"/>
</dbReference>
<dbReference type="CDD" id="cd05793">
    <property type="entry name" value="S1_IF1A"/>
    <property type="match status" value="1"/>
</dbReference>
<dbReference type="FunFam" id="2.40.50.140:FF:000071">
    <property type="entry name" value="Eukaryotic translation initiation factor 1A"/>
    <property type="match status" value="1"/>
</dbReference>
<dbReference type="Gene3D" id="2.40.50.140">
    <property type="entry name" value="Nucleic acid-binding proteins"/>
    <property type="match status" value="1"/>
</dbReference>
<dbReference type="HAMAP" id="MF_00216">
    <property type="entry name" value="aIF_1A"/>
    <property type="match status" value="1"/>
</dbReference>
<dbReference type="InterPro" id="IPR012340">
    <property type="entry name" value="NA-bd_OB-fold"/>
</dbReference>
<dbReference type="InterPro" id="IPR006196">
    <property type="entry name" value="RNA-binding_domain_S1_IF1"/>
</dbReference>
<dbReference type="InterPro" id="IPR001253">
    <property type="entry name" value="TIF_eIF-1A"/>
</dbReference>
<dbReference type="InterPro" id="IPR018104">
    <property type="entry name" value="TIF_eIF-1A_CS"/>
</dbReference>
<dbReference type="NCBIfam" id="TIGR00523">
    <property type="entry name" value="eIF-1A"/>
    <property type="match status" value="1"/>
</dbReference>
<dbReference type="PANTHER" id="PTHR21668">
    <property type="entry name" value="EIF-1A"/>
    <property type="match status" value="1"/>
</dbReference>
<dbReference type="Pfam" id="PF01176">
    <property type="entry name" value="eIF-1a"/>
    <property type="match status" value="1"/>
</dbReference>
<dbReference type="SMART" id="SM00652">
    <property type="entry name" value="eIF1a"/>
    <property type="match status" value="1"/>
</dbReference>
<dbReference type="SUPFAM" id="SSF50249">
    <property type="entry name" value="Nucleic acid-binding proteins"/>
    <property type="match status" value="1"/>
</dbReference>
<dbReference type="PROSITE" id="PS01262">
    <property type="entry name" value="IF1A"/>
    <property type="match status" value="1"/>
</dbReference>
<dbReference type="PROSITE" id="PS50832">
    <property type="entry name" value="S1_IF1_TYPE"/>
    <property type="match status" value="1"/>
</dbReference>
<feature type="chain" id="PRO_0000145112" description="Eukaryotic translation initiation factor 1A">
    <location>
        <begin position="1"/>
        <end position="138"/>
    </location>
</feature>
<feature type="domain" description="S1-like">
    <location>
        <begin position="22"/>
        <end position="96"/>
    </location>
</feature>
<feature type="region of interest" description="Disordered" evidence="2">
    <location>
        <begin position="1"/>
        <end position="28"/>
    </location>
</feature>
<feature type="compositionally biased region" description="Basic residues" evidence="2">
    <location>
        <begin position="1"/>
        <end position="15"/>
    </location>
</feature>
<feature type="compositionally biased region" description="Basic and acidic residues" evidence="2">
    <location>
        <begin position="16"/>
        <end position="27"/>
    </location>
</feature>
<gene>
    <name type="primary">tif11</name>
    <name type="ORF">SPBC25H2.07</name>
</gene>
<accession>P55877</accession>
<comment type="function">
    <text evidence="1">Seems to be required for maximal rate of protein biosynthesis. Enhances ribosome dissociation into subunits and stabilizes the binding of the initiator Met-tRNA(I) to 40 S ribosomal subunits (By similarity).</text>
</comment>
<comment type="similarity">
    <text evidence="3">Belongs to the eIF-1A family.</text>
</comment>
<protein>
    <recommendedName>
        <fullName>Eukaryotic translation initiation factor 1A</fullName>
        <shortName>eIF-1A</shortName>
    </recommendedName>
    <alternativeName>
        <fullName>Eukaryotic translation initiation factor 4C</fullName>
        <shortName>eIF-4C</shortName>
    </alternativeName>
</protein>
<evidence type="ECO:0000250" key="1"/>
<evidence type="ECO:0000256" key="2">
    <source>
        <dbReference type="SAM" id="MobiDB-lite"/>
    </source>
</evidence>
<evidence type="ECO:0000305" key="3"/>
<proteinExistence type="evidence at transcript level"/>
<name>IF1A_SCHPO</name>
<organism>
    <name type="scientific">Schizosaccharomyces pombe (strain 972 / ATCC 24843)</name>
    <name type="common">Fission yeast</name>
    <dbReference type="NCBI Taxonomy" id="284812"/>
    <lineage>
        <taxon>Eukaryota</taxon>
        <taxon>Fungi</taxon>
        <taxon>Dikarya</taxon>
        <taxon>Ascomycota</taxon>
        <taxon>Taphrinomycotina</taxon>
        <taxon>Schizosaccharomycetes</taxon>
        <taxon>Schizosaccharomycetales</taxon>
        <taxon>Schizosaccharomycetaceae</taxon>
        <taxon>Schizosaccharomyces</taxon>
    </lineage>
</organism>
<reference key="1">
    <citation type="journal article" date="2002" name="Nature">
        <title>The genome sequence of Schizosaccharomyces pombe.</title>
        <authorList>
            <person name="Wood V."/>
            <person name="Gwilliam R."/>
            <person name="Rajandream M.A."/>
            <person name="Lyne M.H."/>
            <person name="Lyne R."/>
            <person name="Stewart A."/>
            <person name="Sgouros J.G."/>
            <person name="Peat N."/>
            <person name="Hayles J."/>
            <person name="Baker S.G."/>
            <person name="Basham D."/>
            <person name="Bowman S."/>
            <person name="Brooks K."/>
            <person name="Brown D."/>
            <person name="Brown S."/>
            <person name="Chillingworth T."/>
            <person name="Churcher C.M."/>
            <person name="Collins M."/>
            <person name="Connor R."/>
            <person name="Cronin A."/>
            <person name="Davis P."/>
            <person name="Feltwell T."/>
            <person name="Fraser A."/>
            <person name="Gentles S."/>
            <person name="Goble A."/>
            <person name="Hamlin N."/>
            <person name="Harris D.E."/>
            <person name="Hidalgo J."/>
            <person name="Hodgson G."/>
            <person name="Holroyd S."/>
            <person name="Hornsby T."/>
            <person name="Howarth S."/>
            <person name="Huckle E.J."/>
            <person name="Hunt S."/>
            <person name="Jagels K."/>
            <person name="James K.D."/>
            <person name="Jones L."/>
            <person name="Jones M."/>
            <person name="Leather S."/>
            <person name="McDonald S."/>
            <person name="McLean J."/>
            <person name="Mooney P."/>
            <person name="Moule S."/>
            <person name="Mungall K.L."/>
            <person name="Murphy L.D."/>
            <person name="Niblett D."/>
            <person name="Odell C."/>
            <person name="Oliver K."/>
            <person name="O'Neil S."/>
            <person name="Pearson D."/>
            <person name="Quail M.A."/>
            <person name="Rabbinowitsch E."/>
            <person name="Rutherford K.M."/>
            <person name="Rutter S."/>
            <person name="Saunders D."/>
            <person name="Seeger K."/>
            <person name="Sharp S."/>
            <person name="Skelton J."/>
            <person name="Simmonds M.N."/>
            <person name="Squares R."/>
            <person name="Squares S."/>
            <person name="Stevens K."/>
            <person name="Taylor K."/>
            <person name="Taylor R.G."/>
            <person name="Tivey A."/>
            <person name="Walsh S.V."/>
            <person name="Warren T."/>
            <person name="Whitehead S."/>
            <person name="Woodward J.R."/>
            <person name="Volckaert G."/>
            <person name="Aert R."/>
            <person name="Robben J."/>
            <person name="Grymonprez B."/>
            <person name="Weltjens I."/>
            <person name="Vanstreels E."/>
            <person name="Rieger M."/>
            <person name="Schaefer M."/>
            <person name="Mueller-Auer S."/>
            <person name="Gabel C."/>
            <person name="Fuchs M."/>
            <person name="Duesterhoeft A."/>
            <person name="Fritzc C."/>
            <person name="Holzer E."/>
            <person name="Moestl D."/>
            <person name="Hilbert H."/>
            <person name="Borzym K."/>
            <person name="Langer I."/>
            <person name="Beck A."/>
            <person name="Lehrach H."/>
            <person name="Reinhardt R."/>
            <person name="Pohl T.M."/>
            <person name="Eger P."/>
            <person name="Zimmermann W."/>
            <person name="Wedler H."/>
            <person name="Wambutt R."/>
            <person name="Purnelle B."/>
            <person name="Goffeau A."/>
            <person name="Cadieu E."/>
            <person name="Dreano S."/>
            <person name="Gloux S."/>
            <person name="Lelaure V."/>
            <person name="Mottier S."/>
            <person name="Galibert F."/>
            <person name="Aves S.J."/>
            <person name="Xiang Z."/>
            <person name="Hunt C."/>
            <person name="Moore K."/>
            <person name="Hurst S.M."/>
            <person name="Lucas M."/>
            <person name="Rochet M."/>
            <person name="Gaillardin C."/>
            <person name="Tallada V.A."/>
            <person name="Garzon A."/>
            <person name="Thode G."/>
            <person name="Daga R.R."/>
            <person name="Cruzado L."/>
            <person name="Jimenez J."/>
            <person name="Sanchez M."/>
            <person name="del Rey F."/>
            <person name="Benito J."/>
            <person name="Dominguez A."/>
            <person name="Revuelta J.L."/>
            <person name="Moreno S."/>
            <person name="Armstrong J."/>
            <person name="Forsburg S.L."/>
            <person name="Cerutti L."/>
            <person name="Lowe T."/>
            <person name="McCombie W.R."/>
            <person name="Paulsen I."/>
            <person name="Potashkin J."/>
            <person name="Shpakovski G.V."/>
            <person name="Ussery D."/>
            <person name="Barrell B.G."/>
            <person name="Nurse P."/>
        </authorList>
    </citation>
    <scope>NUCLEOTIDE SEQUENCE [LARGE SCALE GENOMIC DNA]</scope>
    <source>
        <strain>972 / ATCC 24843</strain>
    </source>
</reference>
<reference key="2">
    <citation type="submission" date="1997-01" db="EMBL/GenBank/DDBJ databases">
        <title>S.pombe translation initiation factor eIF1A.</title>
        <authorList>
            <person name="Kawamukai M."/>
        </authorList>
    </citation>
    <scope>NUCLEOTIDE SEQUENCE [MRNA] OF 3-138</scope>
</reference>
<sequence length="138" mass="15678">MPKNKGKGGKNRRRGKNENENEKRELTYAEEGQMYAQVTKMLGNGRIEAACFDGVKRLGHIRGKLRKKVWINQGDIILLSLREFQDEKGDVILKYTADEARTLKNQGELPETAKINETDTFGAEGEDDLDFEFDVDAI</sequence>
<keyword id="KW-0396">Initiation factor</keyword>
<keyword id="KW-0648">Protein biosynthesis</keyword>
<keyword id="KW-1185">Reference proteome</keyword>